<dbReference type="EMBL" id="CP001600">
    <property type="protein sequence ID" value="ACR70495.1"/>
    <property type="molecule type" value="Genomic_DNA"/>
</dbReference>
<dbReference type="RefSeq" id="WP_015872569.1">
    <property type="nucleotide sequence ID" value="NZ_CP169062.1"/>
</dbReference>
<dbReference type="SMR" id="C5BAT6"/>
<dbReference type="STRING" id="67780.B6E78_08470"/>
<dbReference type="KEGG" id="eic:NT01EI_3357"/>
<dbReference type="PATRIC" id="fig|634503.3.peg.2984"/>
<dbReference type="HOGENOM" id="CLU_085336_1_0_6"/>
<dbReference type="OrthoDB" id="9783391at2"/>
<dbReference type="Proteomes" id="UP000001485">
    <property type="component" value="Chromosome"/>
</dbReference>
<dbReference type="GO" id="GO:0005829">
    <property type="term" value="C:cytosol"/>
    <property type="evidence" value="ECO:0007669"/>
    <property type="project" value="TreeGrafter"/>
</dbReference>
<dbReference type="FunFam" id="1.20.120.740:FF:000001">
    <property type="entry name" value="UPF0149 protein YgfB"/>
    <property type="match status" value="1"/>
</dbReference>
<dbReference type="Gene3D" id="1.20.120.740">
    <property type="entry name" value="YgfB uncharacterised protein family UPF0149, PF03695"/>
    <property type="match status" value="1"/>
</dbReference>
<dbReference type="HAMAP" id="MF_00346">
    <property type="entry name" value="UPF0149"/>
    <property type="match status" value="1"/>
</dbReference>
<dbReference type="InterPro" id="IPR011978">
    <property type="entry name" value="YgfB-like"/>
</dbReference>
<dbReference type="InterPro" id="IPR036255">
    <property type="entry name" value="YgfB-like_sf"/>
</dbReference>
<dbReference type="NCBIfam" id="NF002477">
    <property type="entry name" value="PRK01736.1"/>
    <property type="match status" value="1"/>
</dbReference>
<dbReference type="NCBIfam" id="TIGR02292">
    <property type="entry name" value="ygfB_yecA"/>
    <property type="match status" value="1"/>
</dbReference>
<dbReference type="PANTHER" id="PTHR37528">
    <property type="entry name" value="UPF0149 PROTEIN YGFB"/>
    <property type="match status" value="1"/>
</dbReference>
<dbReference type="PANTHER" id="PTHR37528:SF1">
    <property type="entry name" value="UPF0149 PROTEIN YGFB"/>
    <property type="match status" value="1"/>
</dbReference>
<dbReference type="Pfam" id="PF03695">
    <property type="entry name" value="UPF0149"/>
    <property type="match status" value="1"/>
</dbReference>
<dbReference type="SUPFAM" id="SSF101327">
    <property type="entry name" value="YgfB-like"/>
    <property type="match status" value="1"/>
</dbReference>
<accession>C5BAT6</accession>
<evidence type="ECO:0000255" key="1">
    <source>
        <dbReference type="HAMAP-Rule" id="MF_00346"/>
    </source>
</evidence>
<gene>
    <name type="ordered locus">NT01EI_3357</name>
</gene>
<comment type="similarity">
    <text evidence="1">Belongs to the UPF0149 family.</text>
</comment>
<feature type="chain" id="PRO_1000205322" description="UPF0149 protein NT01EI_3357">
    <location>
        <begin position="1"/>
        <end position="190"/>
    </location>
</feature>
<organism>
    <name type="scientific">Edwardsiella ictaluri (strain 93-146)</name>
    <dbReference type="NCBI Taxonomy" id="634503"/>
    <lineage>
        <taxon>Bacteria</taxon>
        <taxon>Pseudomonadati</taxon>
        <taxon>Pseudomonadota</taxon>
        <taxon>Gammaproteobacteria</taxon>
        <taxon>Enterobacterales</taxon>
        <taxon>Hafniaceae</taxon>
        <taxon>Edwardsiella</taxon>
    </lineage>
</organism>
<sequence>MSTENSPTDYATLTQVLQQQGVALTAAEMHGLLSGLLCGGNRDDSWLTLVHDLTNEGMAFSQHLSQPLQVLYGQTRSALEGGEFAFQLLLPGEDDASVFARADALAGWVNHFLLGLGMMQTKLGQVKGDVGESIDDLRNIAQLGYDEDEDQETLAHSLEEVAEYVRMAAMLCHGEFSCSGGPASDTPRLH</sequence>
<reference key="1">
    <citation type="submission" date="2009-03" db="EMBL/GenBank/DDBJ databases">
        <title>Complete genome sequence of Edwardsiella ictaluri 93-146.</title>
        <authorList>
            <person name="Williams M.L."/>
            <person name="Gillaspy A.F."/>
            <person name="Dyer D.W."/>
            <person name="Thune R.L."/>
            <person name="Waldbieser G.C."/>
            <person name="Schuster S.C."/>
            <person name="Gipson J."/>
            <person name="Zaitshik J."/>
            <person name="Landry C."/>
            <person name="Lawrence M.L."/>
        </authorList>
    </citation>
    <scope>NUCLEOTIDE SEQUENCE [LARGE SCALE GENOMIC DNA]</scope>
    <source>
        <strain>93-146</strain>
    </source>
</reference>
<proteinExistence type="inferred from homology"/>
<protein>
    <recommendedName>
        <fullName evidence="1">UPF0149 protein NT01EI_3357</fullName>
    </recommendedName>
</protein>
<name>Y3357_EDWI9</name>